<keyword id="KW-0963">Cytoplasm</keyword>
<keyword id="KW-0396">Initiation factor</keyword>
<keyword id="KW-0648">Protein biosynthesis</keyword>
<keyword id="KW-0694">RNA-binding</keyword>
<keyword id="KW-0699">rRNA-binding</keyword>
<gene>
    <name evidence="1" type="primary">infA</name>
    <name type="ordered locus">LMOf2365_2583</name>
</gene>
<name>IF1_LISMF</name>
<comment type="function">
    <text evidence="1">One of the essential components for the initiation of protein synthesis. Stabilizes the binding of IF-2 and IF-3 on the 30S subunit to which N-formylmethionyl-tRNA(fMet) subsequently binds. Helps modulate mRNA selection, yielding the 30S pre-initiation complex (PIC). Upon addition of the 50S ribosomal subunit IF-1, IF-2 and IF-3 are released leaving the mature 70S translation initiation complex.</text>
</comment>
<comment type="subunit">
    <text evidence="1">Component of the 30S ribosomal translation pre-initiation complex which assembles on the 30S ribosome in the order IF-2 and IF-3, IF-1 and N-formylmethionyl-tRNA(fMet); mRNA recruitment can occur at any time during PIC assembly.</text>
</comment>
<comment type="subcellular location">
    <subcellularLocation>
        <location evidence="1">Cytoplasm</location>
    </subcellularLocation>
</comment>
<comment type="similarity">
    <text evidence="1">Belongs to the IF-1 family.</text>
</comment>
<reference key="1">
    <citation type="journal article" date="2004" name="Nucleic Acids Res.">
        <title>Whole genome comparisons of serotype 4b and 1/2a strains of the food-borne pathogen Listeria monocytogenes reveal new insights into the core genome components of this species.</title>
        <authorList>
            <person name="Nelson K.E."/>
            <person name="Fouts D.E."/>
            <person name="Mongodin E.F."/>
            <person name="Ravel J."/>
            <person name="DeBoy R.T."/>
            <person name="Kolonay J.F."/>
            <person name="Rasko D.A."/>
            <person name="Angiuoli S.V."/>
            <person name="Gill S.R."/>
            <person name="Paulsen I.T."/>
            <person name="Peterson J.D."/>
            <person name="White O."/>
            <person name="Nelson W.C."/>
            <person name="Nierman W.C."/>
            <person name="Beanan M.J."/>
            <person name="Brinkac L.M."/>
            <person name="Daugherty S.C."/>
            <person name="Dodson R.J."/>
            <person name="Durkin A.S."/>
            <person name="Madupu R."/>
            <person name="Haft D.H."/>
            <person name="Selengut J."/>
            <person name="Van Aken S.E."/>
            <person name="Khouri H.M."/>
            <person name="Fedorova N."/>
            <person name="Forberger H.A."/>
            <person name="Tran B."/>
            <person name="Kathariou S."/>
            <person name="Wonderling L.D."/>
            <person name="Uhlich G.A."/>
            <person name="Bayles D.O."/>
            <person name="Luchansky J.B."/>
            <person name="Fraser C.M."/>
        </authorList>
    </citation>
    <scope>NUCLEOTIDE SEQUENCE [LARGE SCALE GENOMIC DNA]</scope>
    <source>
        <strain>F2365</strain>
    </source>
</reference>
<feature type="chain" id="PRO_0000095814" description="Translation initiation factor IF-1">
    <location>
        <begin position="1"/>
        <end position="72"/>
    </location>
</feature>
<feature type="domain" description="S1-like" evidence="1">
    <location>
        <begin position="1"/>
        <end position="72"/>
    </location>
</feature>
<sequence>MAKEDVIEVEGVVQETLPNAMFNVELENGHKVLATVSGKIRMHYIRILPGDKVTVELSPYDLTRGRITYRFK</sequence>
<proteinExistence type="inferred from homology"/>
<dbReference type="EMBL" id="AE017262">
    <property type="protein sequence ID" value="AAT05348.1"/>
    <property type="molecule type" value="Genomic_DNA"/>
</dbReference>
<dbReference type="RefSeq" id="WP_003720929.1">
    <property type="nucleotide sequence ID" value="NC_002973.6"/>
</dbReference>
<dbReference type="SMR" id="Q71WG8"/>
<dbReference type="GeneID" id="93240491"/>
<dbReference type="KEGG" id="lmf:LMOf2365_2583"/>
<dbReference type="HOGENOM" id="CLU_151267_1_0_9"/>
<dbReference type="GO" id="GO:0005829">
    <property type="term" value="C:cytosol"/>
    <property type="evidence" value="ECO:0007669"/>
    <property type="project" value="TreeGrafter"/>
</dbReference>
<dbReference type="GO" id="GO:0043022">
    <property type="term" value="F:ribosome binding"/>
    <property type="evidence" value="ECO:0007669"/>
    <property type="project" value="UniProtKB-UniRule"/>
</dbReference>
<dbReference type="GO" id="GO:0019843">
    <property type="term" value="F:rRNA binding"/>
    <property type="evidence" value="ECO:0007669"/>
    <property type="project" value="UniProtKB-UniRule"/>
</dbReference>
<dbReference type="GO" id="GO:0003743">
    <property type="term" value="F:translation initiation factor activity"/>
    <property type="evidence" value="ECO:0007669"/>
    <property type="project" value="UniProtKB-UniRule"/>
</dbReference>
<dbReference type="CDD" id="cd04451">
    <property type="entry name" value="S1_IF1"/>
    <property type="match status" value="1"/>
</dbReference>
<dbReference type="FunFam" id="2.40.50.140:FF:000002">
    <property type="entry name" value="Translation initiation factor IF-1"/>
    <property type="match status" value="1"/>
</dbReference>
<dbReference type="Gene3D" id="2.40.50.140">
    <property type="entry name" value="Nucleic acid-binding proteins"/>
    <property type="match status" value="1"/>
</dbReference>
<dbReference type="HAMAP" id="MF_00075">
    <property type="entry name" value="IF_1"/>
    <property type="match status" value="1"/>
</dbReference>
<dbReference type="InterPro" id="IPR012340">
    <property type="entry name" value="NA-bd_OB-fold"/>
</dbReference>
<dbReference type="InterPro" id="IPR006196">
    <property type="entry name" value="RNA-binding_domain_S1_IF1"/>
</dbReference>
<dbReference type="InterPro" id="IPR003029">
    <property type="entry name" value="S1_domain"/>
</dbReference>
<dbReference type="InterPro" id="IPR004368">
    <property type="entry name" value="TIF_IF1"/>
</dbReference>
<dbReference type="NCBIfam" id="TIGR00008">
    <property type="entry name" value="infA"/>
    <property type="match status" value="1"/>
</dbReference>
<dbReference type="PANTHER" id="PTHR33370">
    <property type="entry name" value="TRANSLATION INITIATION FACTOR IF-1, CHLOROPLASTIC"/>
    <property type="match status" value="1"/>
</dbReference>
<dbReference type="PANTHER" id="PTHR33370:SF1">
    <property type="entry name" value="TRANSLATION INITIATION FACTOR IF-1, CHLOROPLASTIC"/>
    <property type="match status" value="1"/>
</dbReference>
<dbReference type="Pfam" id="PF01176">
    <property type="entry name" value="eIF-1a"/>
    <property type="match status" value="1"/>
</dbReference>
<dbReference type="SMART" id="SM00316">
    <property type="entry name" value="S1"/>
    <property type="match status" value="1"/>
</dbReference>
<dbReference type="SUPFAM" id="SSF50249">
    <property type="entry name" value="Nucleic acid-binding proteins"/>
    <property type="match status" value="1"/>
</dbReference>
<dbReference type="PROSITE" id="PS50832">
    <property type="entry name" value="S1_IF1_TYPE"/>
    <property type="match status" value="1"/>
</dbReference>
<evidence type="ECO:0000255" key="1">
    <source>
        <dbReference type="HAMAP-Rule" id="MF_00075"/>
    </source>
</evidence>
<accession>Q71WG8</accession>
<protein>
    <recommendedName>
        <fullName evidence="1">Translation initiation factor IF-1</fullName>
    </recommendedName>
</protein>
<organism>
    <name type="scientific">Listeria monocytogenes serotype 4b (strain F2365)</name>
    <dbReference type="NCBI Taxonomy" id="265669"/>
    <lineage>
        <taxon>Bacteria</taxon>
        <taxon>Bacillati</taxon>
        <taxon>Bacillota</taxon>
        <taxon>Bacilli</taxon>
        <taxon>Bacillales</taxon>
        <taxon>Listeriaceae</taxon>
        <taxon>Listeria</taxon>
    </lineage>
</organism>